<feature type="chain" id="PRO_0000166441" description="Chalcone--flavanone isomerase">
    <location>
        <begin position="1"/>
        <end position="247"/>
    </location>
</feature>
<feature type="region of interest" description="Disordered" evidence="2">
    <location>
        <begin position="223"/>
        <end position="247"/>
    </location>
</feature>
<feature type="compositionally biased region" description="Basic and acidic residues" evidence="2">
    <location>
        <begin position="223"/>
        <end position="235"/>
    </location>
</feature>
<feature type="binding site" evidence="1">
    <location>
        <position position="56"/>
    </location>
    <ligand>
        <name>substrate</name>
    </ligand>
</feature>
<feature type="binding site" evidence="1">
    <location>
        <position position="121"/>
    </location>
    <ligand>
        <name>substrate</name>
    </ligand>
</feature>
<feature type="binding site" evidence="1">
    <location>
        <position position="198"/>
    </location>
    <ligand>
        <name>substrate</name>
    </ligand>
</feature>
<feature type="site" description="Important for catalytic activity" evidence="1">
    <location>
        <position position="114"/>
    </location>
</feature>
<accession>O22651</accession>
<keyword id="KW-0284">Flavonoid biosynthesis</keyword>
<keyword id="KW-0413">Isomerase</keyword>
<keyword id="KW-1185">Reference proteome</keyword>
<dbReference type="EC" id="5.5.1.6"/>
<dbReference type="EMBL" id="AF031921">
    <property type="protein sequence ID" value="AAB87071.1"/>
    <property type="molecule type" value="mRNA"/>
</dbReference>
<dbReference type="PIR" id="T08032">
    <property type="entry name" value="T08032"/>
</dbReference>
<dbReference type="SMR" id="O22651"/>
<dbReference type="UniPathway" id="UPA00154"/>
<dbReference type="Proteomes" id="UP000504610">
    <property type="component" value="Unplaced"/>
</dbReference>
<dbReference type="GO" id="GO:0045430">
    <property type="term" value="F:chalcone isomerase activity"/>
    <property type="evidence" value="ECO:0007669"/>
    <property type="project" value="UniProtKB-EC"/>
</dbReference>
<dbReference type="GO" id="GO:0009813">
    <property type="term" value="P:flavonoid biosynthetic process"/>
    <property type="evidence" value="ECO:0007669"/>
    <property type="project" value="UniProtKB-UniPathway"/>
</dbReference>
<dbReference type="Gene3D" id="1.10.890.20">
    <property type="match status" value="1"/>
</dbReference>
<dbReference type="Gene3D" id="3.50.70.10">
    <property type="match status" value="2"/>
</dbReference>
<dbReference type="InterPro" id="IPR044164">
    <property type="entry name" value="CFI"/>
</dbReference>
<dbReference type="InterPro" id="IPR016087">
    <property type="entry name" value="Chalcone_isomerase"/>
</dbReference>
<dbReference type="InterPro" id="IPR016088">
    <property type="entry name" value="Chalcone_isomerase_3-sand"/>
</dbReference>
<dbReference type="InterPro" id="IPR016089">
    <property type="entry name" value="Chalcone_isomerase_bundle_sf"/>
</dbReference>
<dbReference type="InterPro" id="IPR036298">
    <property type="entry name" value="Chalcone_isomerase_sf"/>
</dbReference>
<dbReference type="PANTHER" id="PTHR28039:SF8">
    <property type="entry name" value="CHALCONE--FLAVANONE ISOMERASE 1-RELATED"/>
    <property type="match status" value="1"/>
</dbReference>
<dbReference type="PANTHER" id="PTHR28039">
    <property type="entry name" value="CHALCONE--FLAVONONE ISOMERASE 1-RELATED"/>
    <property type="match status" value="1"/>
</dbReference>
<dbReference type="Pfam" id="PF02431">
    <property type="entry name" value="Chalcone"/>
    <property type="match status" value="1"/>
</dbReference>
<dbReference type="SUPFAM" id="SSF54626">
    <property type="entry name" value="Chalcone isomerase"/>
    <property type="match status" value="1"/>
</dbReference>
<protein>
    <recommendedName>
        <fullName>Chalcone--flavanone isomerase</fullName>
        <shortName>Chalcone isomerase</shortName>
        <ecNumber>5.5.1.6</ecNumber>
    </recommendedName>
</protein>
<name>CFI_RAPSA</name>
<sequence>MSSSDCPSPLPTAPKLQVDSVTFPPSVISPASSNTLFLGGAGVRGLEIQGKFVIFTVIGVYLDPVSVPSLSVKWEGKTTEELTESVPFFREIVIGAFEKFIKVTMKLPLTGQQYSEKVTENCVAIWKSLGIYTDSEAKAVERFLEVFKDETFPPGASILFALSPEGSLTVAFSKDDSIPETGKAVIENKLLAEAVLESIIGKNRVSPGARLRVAERLAQLMKENKVEEDATKTDQEEANDLSLAKEN</sequence>
<organism>
    <name type="scientific">Raphanus sativus</name>
    <name type="common">Radish</name>
    <name type="synonym">Raphanus raphanistrum var. sativus</name>
    <dbReference type="NCBI Taxonomy" id="3726"/>
    <lineage>
        <taxon>Eukaryota</taxon>
        <taxon>Viridiplantae</taxon>
        <taxon>Streptophyta</taxon>
        <taxon>Embryophyta</taxon>
        <taxon>Tracheophyta</taxon>
        <taxon>Spermatophyta</taxon>
        <taxon>Magnoliopsida</taxon>
        <taxon>eudicotyledons</taxon>
        <taxon>Gunneridae</taxon>
        <taxon>Pentapetalae</taxon>
        <taxon>rosids</taxon>
        <taxon>malvids</taxon>
        <taxon>Brassicales</taxon>
        <taxon>Brassicaceae</taxon>
        <taxon>Brassiceae</taxon>
        <taxon>Raphanus</taxon>
    </lineage>
</organism>
<reference key="1">
    <citation type="submission" date="1997-10" db="EMBL/GenBank/DDBJ databases">
        <authorList>
            <person name="Kwon S.I."/>
            <person name="An C.-S."/>
        </authorList>
    </citation>
    <scope>NUCLEOTIDE SEQUENCE [MRNA]</scope>
</reference>
<evidence type="ECO:0000250" key="1"/>
<evidence type="ECO:0000256" key="2">
    <source>
        <dbReference type="SAM" id="MobiDB-lite"/>
    </source>
</evidence>
<evidence type="ECO:0000305" key="3"/>
<proteinExistence type="evidence at transcript level"/>
<gene>
    <name type="primary">CHI</name>
</gene>
<comment type="function">
    <text evidence="1">Catalyzes the intramolecular cyclization of bicyclic chalcones into tricyclic (S)-flavanones. Responsible for the isomerization of 4,2',4',6'-tetrahydroxychalcone (also termed chalcone) into naringenin (By similarity).</text>
</comment>
<comment type="catalytic activity">
    <reaction>
        <text>a chalcone = a flavanone.</text>
        <dbReference type="EC" id="5.5.1.6"/>
    </reaction>
</comment>
<comment type="pathway">
    <text>Secondary metabolite biosynthesis; flavonoid biosynthesis.</text>
</comment>
<comment type="miscellaneous">
    <text>Part of the biosynthetic pathway for all classes of flavonoids, a large class of secondary plant metabolites, many of which are brightly colored.</text>
</comment>
<comment type="similarity">
    <text evidence="3">Belongs to the chalcone isomerase family.</text>
</comment>